<name>Y350_THEON</name>
<dbReference type="EMBL" id="CP000855">
    <property type="protein sequence ID" value="ACJ15835.1"/>
    <property type="molecule type" value="Genomic_DNA"/>
</dbReference>
<dbReference type="RefSeq" id="WP_012571307.1">
    <property type="nucleotide sequence ID" value="NC_011529.1"/>
</dbReference>
<dbReference type="SMR" id="B6YTE8"/>
<dbReference type="STRING" id="523850.TON_0350"/>
<dbReference type="GeneID" id="7018015"/>
<dbReference type="KEGG" id="ton:TON_0350"/>
<dbReference type="PATRIC" id="fig|523850.10.peg.353"/>
<dbReference type="eggNOG" id="arCOG02119">
    <property type="taxonomic scope" value="Archaea"/>
</dbReference>
<dbReference type="HOGENOM" id="CLU_138334_0_0_2"/>
<dbReference type="OrthoDB" id="63517at2157"/>
<dbReference type="Proteomes" id="UP000002727">
    <property type="component" value="Chromosome"/>
</dbReference>
<dbReference type="HAMAP" id="MF_01223">
    <property type="entry name" value="UPF0212"/>
    <property type="match status" value="1"/>
</dbReference>
<dbReference type="InterPro" id="IPR007564">
    <property type="entry name" value="UPF0212"/>
</dbReference>
<dbReference type="NCBIfam" id="NF003035">
    <property type="entry name" value="PRK03922.1"/>
    <property type="match status" value="1"/>
</dbReference>
<dbReference type="PANTHER" id="PTHR42199">
    <property type="entry name" value="UPF0212 PROTEIN MJ0068"/>
    <property type="match status" value="1"/>
</dbReference>
<dbReference type="PANTHER" id="PTHR42199:SF1">
    <property type="entry name" value="UPF0212 PROTEIN TK1194"/>
    <property type="match status" value="1"/>
</dbReference>
<dbReference type="Pfam" id="PF04475">
    <property type="entry name" value="DUF555"/>
    <property type="match status" value="1"/>
</dbReference>
<dbReference type="PIRSF" id="PIRSF016934">
    <property type="entry name" value="UCP016934"/>
    <property type="match status" value="1"/>
</dbReference>
<proteinExistence type="inferred from homology"/>
<reference key="1">
    <citation type="journal article" date="2008" name="J. Bacteriol.">
        <title>The complete genome sequence of Thermococcus onnurineus NA1 reveals a mixed heterotrophic and carboxydotrophic metabolism.</title>
        <authorList>
            <person name="Lee H.S."/>
            <person name="Kang S.G."/>
            <person name="Bae S.S."/>
            <person name="Lim J.K."/>
            <person name="Cho Y."/>
            <person name="Kim Y.J."/>
            <person name="Jeon J.H."/>
            <person name="Cha S.-S."/>
            <person name="Kwon K.K."/>
            <person name="Kim H.-T."/>
            <person name="Park C.-J."/>
            <person name="Lee H.-W."/>
            <person name="Kim S.I."/>
            <person name="Chun J."/>
            <person name="Colwell R.R."/>
            <person name="Kim S.-J."/>
            <person name="Lee J.-H."/>
        </authorList>
    </citation>
    <scope>NUCLEOTIDE SEQUENCE [LARGE SCALE GENOMIC DNA]</scope>
    <source>
        <strain>NA1</strain>
    </source>
</reference>
<gene>
    <name type="ordered locus">TON_0350</name>
</gene>
<accession>B6YTE8</accession>
<comment type="similarity">
    <text evidence="1">Belongs to the UPF0212 family.</text>
</comment>
<feature type="chain" id="PRO_1000139237" description="UPF0212 protein TON_0350">
    <location>
        <begin position="1"/>
        <end position="126"/>
    </location>
</feature>
<sequence>MGDYVVVLEAPIIVRDVETSEDAINVAVSKVAKALNKEKLDFVRVEIGYSQCPVCGAHFESAFVIGSVGLVGMYLTIKVYNAQTIEHAERIAKAVIGKALKKVPLKVYEIRELTEEEEGEGVEFEE</sequence>
<evidence type="ECO:0000255" key="1">
    <source>
        <dbReference type="HAMAP-Rule" id="MF_01223"/>
    </source>
</evidence>
<protein>
    <recommendedName>
        <fullName evidence="1">UPF0212 protein TON_0350</fullName>
    </recommendedName>
</protein>
<organism>
    <name type="scientific">Thermococcus onnurineus (strain NA1)</name>
    <dbReference type="NCBI Taxonomy" id="523850"/>
    <lineage>
        <taxon>Archaea</taxon>
        <taxon>Methanobacteriati</taxon>
        <taxon>Methanobacteriota</taxon>
        <taxon>Thermococci</taxon>
        <taxon>Thermococcales</taxon>
        <taxon>Thermococcaceae</taxon>
        <taxon>Thermococcus</taxon>
    </lineage>
</organism>